<protein>
    <recommendedName>
        <fullName evidence="5">Fungal defensin triintsin</fullName>
    </recommendedName>
</protein>
<gene>
    <name type="ORF">H109_04975</name>
</gene>
<reference key="1">
    <citation type="journal article" date="2018" name="Genetics">
        <title>Whole-genome analysis illustrates global clonal population structure of the ubiquitous dermatophyte pathogen Trichophyton rubrum.</title>
        <authorList>
            <person name="Persinoti G.F."/>
            <person name="Martinez D.A."/>
            <person name="Li W."/>
            <person name="Doegen A."/>
            <person name="Billmyre R.B."/>
            <person name="Averette A."/>
            <person name="Goldberg J.M."/>
            <person name="Shea T."/>
            <person name="Young S."/>
            <person name="Zeng Q."/>
            <person name="Oliver B.G."/>
            <person name="Barton R."/>
            <person name="Metin B."/>
            <person name="Hilmioglu-Polat S."/>
            <person name="Ilkit M."/>
            <person name="Graeser Y."/>
            <person name="Martinez-Rossi N.M."/>
            <person name="White T.C."/>
            <person name="Heitman J."/>
            <person name="Cuomo C.A."/>
        </authorList>
    </citation>
    <scope>NUCLEOTIDE SEQUENCE [LARGE SCALE GENOMIC DNA]</scope>
    <source>
        <strain>MR816</strain>
    </source>
</reference>
<reference key="2">
    <citation type="journal article" date="2018" name="Peptides">
        <title>Triintsin, a human pathogenic fungus-derived defensin with broad-spectrum antimicrobial activity.</title>
        <authorList>
            <person name="Shen B."/>
            <person name="Song J."/>
            <person name="Zhao Y."/>
            <person name="Zhang Y."/>
            <person name="Liu G."/>
            <person name="Li X."/>
            <person name="Guo X."/>
            <person name="Li W."/>
            <person name="Cao Z."/>
            <person name="Wu Y."/>
        </authorList>
    </citation>
    <scope>NUCLEOTIDE SEQUENCE [GENOMIC DNA]</scope>
    <scope>FUNCTION</scope>
    <scope>SYNTHESIS OF 48-85</scope>
    <scope>3D-STRUCTURE MODELING</scope>
    <source>
        <strain>H6</strain>
    </source>
</reference>
<evidence type="ECO:0000250" key="1">
    <source>
        <dbReference type="UniProtKB" id="I1T3C7"/>
    </source>
</evidence>
<evidence type="ECO:0000255" key="2"/>
<evidence type="ECO:0000269" key="3">
    <source>
    </source>
</evidence>
<evidence type="ECO:0000269" key="4">
    <source>
    </source>
</evidence>
<evidence type="ECO:0000303" key="5">
    <source>
    </source>
</evidence>
<evidence type="ECO:0000305" key="6"/>
<evidence type="ECO:0000305" key="7">
    <source>
    </source>
</evidence>
<sequence length="85" mass="8882">MQFTKLATVLIVSLMGSAAIAAPSVDNAPAVAAEEVAAAPAENLEKRGFGCPLNERECHSHCQSIGRKFGYCGGTLRLTCICGKE</sequence>
<dbReference type="EMBL" id="AOKY01000319">
    <property type="protein sequence ID" value="KDB23160.1"/>
    <property type="molecule type" value="Genomic_DNA"/>
</dbReference>
<dbReference type="SMR" id="A0A059J5P2"/>
<dbReference type="HOGENOM" id="CLU_116797_0_0_1"/>
<dbReference type="OMA" id="FGCPLNE"/>
<dbReference type="OrthoDB" id="4173831at2759"/>
<dbReference type="Proteomes" id="UP000024533">
    <property type="component" value="Unassembled WGS sequence"/>
</dbReference>
<dbReference type="GO" id="GO:0005576">
    <property type="term" value="C:extracellular region"/>
    <property type="evidence" value="ECO:0007669"/>
    <property type="project" value="UniProtKB-SubCell"/>
</dbReference>
<dbReference type="GO" id="GO:0042742">
    <property type="term" value="P:defense response to bacterium"/>
    <property type="evidence" value="ECO:0007669"/>
    <property type="project" value="UniProtKB-KW"/>
</dbReference>
<dbReference type="GO" id="GO:0050832">
    <property type="term" value="P:defense response to fungus"/>
    <property type="evidence" value="ECO:0007669"/>
    <property type="project" value="UniProtKB-KW"/>
</dbReference>
<dbReference type="GO" id="GO:0002376">
    <property type="term" value="P:immune system process"/>
    <property type="evidence" value="ECO:0007669"/>
    <property type="project" value="UniProtKB-KW"/>
</dbReference>
<dbReference type="GO" id="GO:0031640">
    <property type="term" value="P:killing of cells of another organism"/>
    <property type="evidence" value="ECO:0007669"/>
    <property type="project" value="UniProtKB-KW"/>
</dbReference>
<dbReference type="Gene3D" id="3.30.30.10">
    <property type="entry name" value="Knottin, scorpion toxin-like"/>
    <property type="match status" value="1"/>
</dbReference>
<dbReference type="InterPro" id="IPR001542">
    <property type="entry name" value="Defensin_invertebrate/fungal"/>
</dbReference>
<dbReference type="InterPro" id="IPR036574">
    <property type="entry name" value="Scorpion_toxin-like_sf"/>
</dbReference>
<dbReference type="Pfam" id="PF01097">
    <property type="entry name" value="Defensin_2"/>
    <property type="match status" value="1"/>
</dbReference>
<dbReference type="SUPFAM" id="SSF57095">
    <property type="entry name" value="Scorpion toxin-like"/>
    <property type="match status" value="1"/>
</dbReference>
<dbReference type="PROSITE" id="PS51378">
    <property type="entry name" value="INVERT_DEFENSINS"/>
    <property type="match status" value="1"/>
</dbReference>
<organism>
    <name type="scientific">Trichophyton interdigitale (strain MR816)</name>
    <dbReference type="NCBI Taxonomy" id="1215338"/>
    <lineage>
        <taxon>Eukaryota</taxon>
        <taxon>Fungi</taxon>
        <taxon>Dikarya</taxon>
        <taxon>Ascomycota</taxon>
        <taxon>Pezizomycotina</taxon>
        <taxon>Eurotiomycetes</taxon>
        <taxon>Eurotiomycetidae</taxon>
        <taxon>Onygenales</taxon>
        <taxon>Arthrodermataceae</taxon>
        <taxon>Trichophyton</taxon>
    </lineage>
</organism>
<accession>A0A059J5P2</accession>
<feature type="signal peptide" evidence="2">
    <location>
        <begin position="1"/>
        <end position="21"/>
    </location>
</feature>
<feature type="propeptide" id="PRO_0000449381" evidence="7">
    <location>
        <begin position="22"/>
        <end position="47"/>
    </location>
</feature>
<feature type="chain" id="PRO_5001579330" description="Fungal defensin triintsin">
    <location>
        <begin position="48"/>
        <end position="85"/>
    </location>
</feature>
<feature type="disulfide bond" evidence="1 7">
    <location>
        <begin position="51"/>
        <end position="72"/>
    </location>
</feature>
<feature type="disulfide bond" evidence="1 7">
    <location>
        <begin position="58"/>
        <end position="80"/>
    </location>
</feature>
<feature type="disulfide bond" evidence="1 7">
    <location>
        <begin position="62"/>
        <end position="82"/>
    </location>
</feature>
<name>DEFTR_TRIIM</name>
<comment type="function">
    <text evidence="3">Antimicrobial peptide with broad-spectrum activity against Gram-positive bacteria, Gram-negative bacteria, and fungi. Also inhibits clinical isolates, including methicillin-resistant S.aureus (MRSA) (MIC=32 uM), K.pneumoniae, C.albicans and C.parapsilosis. Displays minimal inhibitory concentration (MIC) values similar to minimal bactericidal concentrations (MBC), suggesting a disruptive mechanism mode of action associated with membrane lysis. In vitro, shows hemolytic activity against human red blood cells.</text>
</comment>
<comment type="subcellular location">
    <subcellularLocation>
        <location evidence="6">Secreted</location>
    </subcellularLocation>
</comment>
<comment type="PTM">
    <text evidence="4">Disulfide bonds are essential for antimicrobial activity.</text>
</comment>
<comment type="similarity">
    <text evidence="6">Belongs to the invertebrate defensin family.</text>
</comment>
<comment type="online information" name="The antimicrobial peptide database">
    <link uri="https://wangapd3.com/database/query_output.php?ID=03010"/>
</comment>
<proteinExistence type="inferred from homology"/>
<keyword id="KW-0044">Antibiotic</keyword>
<keyword id="KW-0929">Antimicrobial</keyword>
<keyword id="KW-0165">Cleavage on pair of basic residues</keyword>
<keyword id="KW-0204">Cytolysis</keyword>
<keyword id="KW-0211">Defensin</keyword>
<keyword id="KW-1015">Disulfide bond</keyword>
<keyword id="KW-0295">Fungicide</keyword>
<keyword id="KW-0391">Immunity</keyword>
<keyword id="KW-0399">Innate immunity</keyword>
<keyword id="KW-1185">Reference proteome</keyword>
<keyword id="KW-0964">Secreted</keyword>
<keyword id="KW-0732">Signal</keyword>